<name>HIS4_RHIE6</name>
<accession>B3PWI0</accession>
<feature type="chain" id="PRO_1000135144" description="1-(5-phosphoribosyl)-5-[(5-phosphoribosylamino)methylideneamino] imidazole-4-carboxamide isomerase">
    <location>
        <begin position="1"/>
        <end position="248"/>
    </location>
</feature>
<feature type="active site" description="Proton acceptor" evidence="1">
    <location>
        <position position="8"/>
    </location>
</feature>
<feature type="active site" description="Proton donor" evidence="1">
    <location>
        <position position="129"/>
    </location>
</feature>
<proteinExistence type="inferred from homology"/>
<evidence type="ECO:0000255" key="1">
    <source>
        <dbReference type="HAMAP-Rule" id="MF_01014"/>
    </source>
</evidence>
<organism>
    <name type="scientific">Rhizobium etli (strain CIAT 652)</name>
    <dbReference type="NCBI Taxonomy" id="491916"/>
    <lineage>
        <taxon>Bacteria</taxon>
        <taxon>Pseudomonadati</taxon>
        <taxon>Pseudomonadota</taxon>
        <taxon>Alphaproteobacteria</taxon>
        <taxon>Hyphomicrobiales</taxon>
        <taxon>Rhizobiaceae</taxon>
        <taxon>Rhizobium/Agrobacterium group</taxon>
        <taxon>Rhizobium</taxon>
    </lineage>
</organism>
<reference key="1">
    <citation type="journal article" date="2010" name="Appl. Environ. Microbiol.">
        <title>Conserved symbiotic plasmid DNA sequences in the multireplicon pangenomic structure of Rhizobium etli.</title>
        <authorList>
            <person name="Gonzalez V."/>
            <person name="Acosta J.L."/>
            <person name="Santamaria R.I."/>
            <person name="Bustos P."/>
            <person name="Fernandez J.L."/>
            <person name="Hernandez Gonzalez I.L."/>
            <person name="Diaz R."/>
            <person name="Flores M."/>
            <person name="Palacios R."/>
            <person name="Mora J."/>
            <person name="Davila G."/>
        </authorList>
    </citation>
    <scope>NUCLEOTIDE SEQUENCE [LARGE SCALE GENOMIC DNA]</scope>
    <source>
        <strain>CIAT 652</strain>
    </source>
</reference>
<comment type="catalytic activity">
    <reaction evidence="1">
        <text>1-(5-phospho-beta-D-ribosyl)-5-[(5-phospho-beta-D-ribosylamino)methylideneamino]imidazole-4-carboxamide = 5-[(5-phospho-1-deoxy-D-ribulos-1-ylimino)methylamino]-1-(5-phospho-beta-D-ribosyl)imidazole-4-carboxamide</text>
        <dbReference type="Rhea" id="RHEA:15469"/>
        <dbReference type="ChEBI" id="CHEBI:58435"/>
        <dbReference type="ChEBI" id="CHEBI:58525"/>
        <dbReference type="EC" id="5.3.1.16"/>
    </reaction>
</comment>
<comment type="pathway">
    <text evidence="1">Amino-acid biosynthesis; L-histidine biosynthesis; L-histidine from 5-phospho-alpha-D-ribose 1-diphosphate: step 4/9.</text>
</comment>
<comment type="subcellular location">
    <subcellularLocation>
        <location evidence="1">Cytoplasm</location>
    </subcellularLocation>
</comment>
<comment type="similarity">
    <text evidence="1">Belongs to the HisA/HisF family.</text>
</comment>
<keyword id="KW-0028">Amino-acid biosynthesis</keyword>
<keyword id="KW-0963">Cytoplasm</keyword>
<keyword id="KW-0368">Histidine biosynthesis</keyword>
<keyword id="KW-0413">Isomerase</keyword>
<sequence length="248" mass="26142">MILFPAIDLKGGQCVRLKLGDMQQATVYNTDPAAQAKSFEEQGFEWLHVVDLDGAFAGHSANGDAVEAILKATKNPVQLGGGIRTLDHIEAWLARGLRRVILGTVAVRNPDLVIEACRKFPGHVAVGIDAKGGKVAVEGWAEASELGVIELAQKFEGAGVSAIIYTDIDRDGILAGINWASTLALAGAVSIPVIASGGLASLDDVRRMLEPDARKLEGAISGRALYDGRIDPRQALALIKASRAKETA</sequence>
<dbReference type="EC" id="5.3.1.16" evidence="1"/>
<dbReference type="EMBL" id="CP001074">
    <property type="protein sequence ID" value="ACE89048.1"/>
    <property type="molecule type" value="Genomic_DNA"/>
</dbReference>
<dbReference type="SMR" id="B3PWI0"/>
<dbReference type="KEGG" id="rec:RHECIAT_CH0000045"/>
<dbReference type="eggNOG" id="COG0106">
    <property type="taxonomic scope" value="Bacteria"/>
</dbReference>
<dbReference type="HOGENOM" id="CLU_048577_1_1_5"/>
<dbReference type="UniPathway" id="UPA00031">
    <property type="reaction ID" value="UER00009"/>
</dbReference>
<dbReference type="Proteomes" id="UP000008817">
    <property type="component" value="Chromosome"/>
</dbReference>
<dbReference type="GO" id="GO:0005737">
    <property type="term" value="C:cytoplasm"/>
    <property type="evidence" value="ECO:0007669"/>
    <property type="project" value="UniProtKB-SubCell"/>
</dbReference>
<dbReference type="GO" id="GO:0003949">
    <property type="term" value="F:1-(5-phosphoribosyl)-5-[(5-phosphoribosylamino)methylideneamino]imidazole-4-carboxamide isomerase activity"/>
    <property type="evidence" value="ECO:0007669"/>
    <property type="project" value="UniProtKB-UniRule"/>
</dbReference>
<dbReference type="GO" id="GO:0000105">
    <property type="term" value="P:L-histidine biosynthetic process"/>
    <property type="evidence" value="ECO:0007669"/>
    <property type="project" value="UniProtKB-UniRule"/>
</dbReference>
<dbReference type="GO" id="GO:0000162">
    <property type="term" value="P:L-tryptophan biosynthetic process"/>
    <property type="evidence" value="ECO:0007669"/>
    <property type="project" value="TreeGrafter"/>
</dbReference>
<dbReference type="CDD" id="cd04732">
    <property type="entry name" value="HisA"/>
    <property type="match status" value="1"/>
</dbReference>
<dbReference type="FunFam" id="3.20.20.70:FF:000009">
    <property type="entry name" value="1-(5-phosphoribosyl)-5-[(5-phosphoribosylamino)methylideneamino] imidazole-4-carboxamide isomerase"/>
    <property type="match status" value="1"/>
</dbReference>
<dbReference type="Gene3D" id="3.20.20.70">
    <property type="entry name" value="Aldolase class I"/>
    <property type="match status" value="1"/>
</dbReference>
<dbReference type="HAMAP" id="MF_01014">
    <property type="entry name" value="HisA"/>
    <property type="match status" value="1"/>
</dbReference>
<dbReference type="InterPro" id="IPR013785">
    <property type="entry name" value="Aldolase_TIM"/>
</dbReference>
<dbReference type="InterPro" id="IPR006062">
    <property type="entry name" value="His_biosynth"/>
</dbReference>
<dbReference type="InterPro" id="IPR006063">
    <property type="entry name" value="HisA_bact_arch"/>
</dbReference>
<dbReference type="InterPro" id="IPR044524">
    <property type="entry name" value="Isoase_HisA-like"/>
</dbReference>
<dbReference type="InterPro" id="IPR023016">
    <property type="entry name" value="Isoase_HisA-like_bact"/>
</dbReference>
<dbReference type="InterPro" id="IPR001763">
    <property type="entry name" value="Rhodanese-like_dom"/>
</dbReference>
<dbReference type="InterPro" id="IPR011060">
    <property type="entry name" value="RibuloseP-bd_barrel"/>
</dbReference>
<dbReference type="NCBIfam" id="TIGR00007">
    <property type="entry name" value="1-(5-phosphoribosyl)-5-[(5-phosphoribosylamino)methylideneamino]imidazole-4-carboxamide isomerase"/>
    <property type="match status" value="1"/>
</dbReference>
<dbReference type="PANTHER" id="PTHR43090">
    <property type="entry name" value="1-(5-PHOSPHORIBOSYL)-5-[(5-PHOSPHORIBOSYLAMINO)METHYLIDENEAMINO] IMIDAZOLE-4-CARBOXAMIDE ISOMERASE"/>
    <property type="match status" value="1"/>
</dbReference>
<dbReference type="PANTHER" id="PTHR43090:SF2">
    <property type="entry name" value="1-(5-PHOSPHORIBOSYL)-5-[(5-PHOSPHORIBOSYLAMINO)METHYLIDENEAMINO] IMIDAZOLE-4-CARBOXAMIDE ISOMERASE"/>
    <property type="match status" value="1"/>
</dbReference>
<dbReference type="Pfam" id="PF00977">
    <property type="entry name" value="His_biosynth"/>
    <property type="match status" value="1"/>
</dbReference>
<dbReference type="SUPFAM" id="SSF51366">
    <property type="entry name" value="Ribulose-phoshate binding barrel"/>
    <property type="match status" value="1"/>
</dbReference>
<protein>
    <recommendedName>
        <fullName evidence="1">1-(5-phosphoribosyl)-5-[(5-phosphoribosylamino)methylideneamino] imidazole-4-carboxamide isomerase</fullName>
        <ecNumber evidence="1">5.3.1.16</ecNumber>
    </recommendedName>
    <alternativeName>
        <fullName evidence="1">Phosphoribosylformimino-5-aminoimidazole carboxamide ribotide isomerase</fullName>
    </alternativeName>
</protein>
<gene>
    <name evidence="1" type="primary">hisA</name>
    <name type="ordered locus">RHECIAT_CH0000045</name>
</gene>